<dbReference type="EC" id="6.1.1.6" evidence="1"/>
<dbReference type="EMBL" id="AL766847">
    <property type="protein sequence ID" value="CAD46415.1"/>
    <property type="molecule type" value="Genomic_DNA"/>
</dbReference>
<dbReference type="RefSeq" id="WP_000070708.1">
    <property type="nucleotide sequence ID" value="NC_004368.1"/>
</dbReference>
<dbReference type="SMR" id="Q8E656"/>
<dbReference type="KEGG" id="san:lysS"/>
<dbReference type="eggNOG" id="COG1190">
    <property type="taxonomic scope" value="Bacteria"/>
</dbReference>
<dbReference type="HOGENOM" id="CLU_008255_6_0_9"/>
<dbReference type="Proteomes" id="UP000000823">
    <property type="component" value="Chromosome"/>
</dbReference>
<dbReference type="GO" id="GO:0005829">
    <property type="term" value="C:cytosol"/>
    <property type="evidence" value="ECO:0007669"/>
    <property type="project" value="TreeGrafter"/>
</dbReference>
<dbReference type="GO" id="GO:0005524">
    <property type="term" value="F:ATP binding"/>
    <property type="evidence" value="ECO:0007669"/>
    <property type="project" value="UniProtKB-UniRule"/>
</dbReference>
<dbReference type="GO" id="GO:0140096">
    <property type="term" value="F:catalytic activity, acting on a protein"/>
    <property type="evidence" value="ECO:0007669"/>
    <property type="project" value="UniProtKB-ARBA"/>
</dbReference>
<dbReference type="GO" id="GO:0004824">
    <property type="term" value="F:lysine-tRNA ligase activity"/>
    <property type="evidence" value="ECO:0007669"/>
    <property type="project" value="UniProtKB-UniRule"/>
</dbReference>
<dbReference type="GO" id="GO:0000287">
    <property type="term" value="F:magnesium ion binding"/>
    <property type="evidence" value="ECO:0007669"/>
    <property type="project" value="UniProtKB-UniRule"/>
</dbReference>
<dbReference type="GO" id="GO:0016740">
    <property type="term" value="F:transferase activity"/>
    <property type="evidence" value="ECO:0007669"/>
    <property type="project" value="UniProtKB-ARBA"/>
</dbReference>
<dbReference type="GO" id="GO:0000049">
    <property type="term" value="F:tRNA binding"/>
    <property type="evidence" value="ECO:0007669"/>
    <property type="project" value="TreeGrafter"/>
</dbReference>
<dbReference type="GO" id="GO:0006430">
    <property type="term" value="P:lysyl-tRNA aminoacylation"/>
    <property type="evidence" value="ECO:0007669"/>
    <property type="project" value="UniProtKB-UniRule"/>
</dbReference>
<dbReference type="CDD" id="cd00775">
    <property type="entry name" value="LysRS_core"/>
    <property type="match status" value="1"/>
</dbReference>
<dbReference type="CDD" id="cd04322">
    <property type="entry name" value="LysRS_N"/>
    <property type="match status" value="1"/>
</dbReference>
<dbReference type="FunFam" id="2.40.50.140:FF:000024">
    <property type="entry name" value="Lysine--tRNA ligase"/>
    <property type="match status" value="1"/>
</dbReference>
<dbReference type="FunFam" id="3.30.930.10:FF:000001">
    <property type="entry name" value="Lysine--tRNA ligase"/>
    <property type="match status" value="1"/>
</dbReference>
<dbReference type="Gene3D" id="3.30.930.10">
    <property type="entry name" value="Bira Bifunctional Protein, Domain 2"/>
    <property type="match status" value="1"/>
</dbReference>
<dbReference type="Gene3D" id="2.40.50.140">
    <property type="entry name" value="Nucleic acid-binding proteins"/>
    <property type="match status" value="1"/>
</dbReference>
<dbReference type="HAMAP" id="MF_00252">
    <property type="entry name" value="Lys_tRNA_synth_class2"/>
    <property type="match status" value="1"/>
</dbReference>
<dbReference type="InterPro" id="IPR004364">
    <property type="entry name" value="Aa-tRNA-synt_II"/>
</dbReference>
<dbReference type="InterPro" id="IPR006195">
    <property type="entry name" value="aa-tRNA-synth_II"/>
</dbReference>
<dbReference type="InterPro" id="IPR045864">
    <property type="entry name" value="aa-tRNA-synth_II/BPL/LPL"/>
</dbReference>
<dbReference type="InterPro" id="IPR002313">
    <property type="entry name" value="Lys-tRNA-ligase_II"/>
</dbReference>
<dbReference type="InterPro" id="IPR034762">
    <property type="entry name" value="Lys-tRNA-ligase_II_bac/euk"/>
</dbReference>
<dbReference type="InterPro" id="IPR044136">
    <property type="entry name" value="Lys-tRNA-ligase_II_N"/>
</dbReference>
<dbReference type="InterPro" id="IPR018149">
    <property type="entry name" value="Lys-tRNA-synth_II_C"/>
</dbReference>
<dbReference type="InterPro" id="IPR012340">
    <property type="entry name" value="NA-bd_OB-fold"/>
</dbReference>
<dbReference type="InterPro" id="IPR004365">
    <property type="entry name" value="NA-bd_OB_tRNA"/>
</dbReference>
<dbReference type="NCBIfam" id="TIGR00499">
    <property type="entry name" value="lysS_bact"/>
    <property type="match status" value="1"/>
</dbReference>
<dbReference type="NCBIfam" id="NF001756">
    <property type="entry name" value="PRK00484.1"/>
    <property type="match status" value="1"/>
</dbReference>
<dbReference type="PANTHER" id="PTHR42918:SF15">
    <property type="entry name" value="LYSINE--TRNA LIGASE, CHLOROPLASTIC_MITOCHONDRIAL"/>
    <property type="match status" value="1"/>
</dbReference>
<dbReference type="PANTHER" id="PTHR42918">
    <property type="entry name" value="LYSYL-TRNA SYNTHETASE"/>
    <property type="match status" value="1"/>
</dbReference>
<dbReference type="Pfam" id="PF00152">
    <property type="entry name" value="tRNA-synt_2"/>
    <property type="match status" value="1"/>
</dbReference>
<dbReference type="Pfam" id="PF01336">
    <property type="entry name" value="tRNA_anti-codon"/>
    <property type="match status" value="1"/>
</dbReference>
<dbReference type="PIRSF" id="PIRSF039101">
    <property type="entry name" value="LysRS2"/>
    <property type="match status" value="1"/>
</dbReference>
<dbReference type="PRINTS" id="PR00982">
    <property type="entry name" value="TRNASYNTHLYS"/>
</dbReference>
<dbReference type="SUPFAM" id="SSF55681">
    <property type="entry name" value="Class II aaRS and biotin synthetases"/>
    <property type="match status" value="1"/>
</dbReference>
<dbReference type="SUPFAM" id="SSF50249">
    <property type="entry name" value="Nucleic acid-binding proteins"/>
    <property type="match status" value="1"/>
</dbReference>
<dbReference type="PROSITE" id="PS50862">
    <property type="entry name" value="AA_TRNA_LIGASE_II"/>
    <property type="match status" value="1"/>
</dbReference>
<accession>Q8E656</accession>
<organism>
    <name type="scientific">Streptococcus agalactiae serotype III (strain NEM316)</name>
    <dbReference type="NCBI Taxonomy" id="211110"/>
    <lineage>
        <taxon>Bacteria</taxon>
        <taxon>Bacillati</taxon>
        <taxon>Bacillota</taxon>
        <taxon>Bacilli</taxon>
        <taxon>Lactobacillales</taxon>
        <taxon>Streptococcaceae</taxon>
        <taxon>Streptococcus</taxon>
    </lineage>
</organism>
<reference key="1">
    <citation type="journal article" date="2002" name="Mol. Microbiol.">
        <title>Genome sequence of Streptococcus agalactiae, a pathogen causing invasive neonatal disease.</title>
        <authorList>
            <person name="Glaser P."/>
            <person name="Rusniok C."/>
            <person name="Buchrieser C."/>
            <person name="Chevalier F."/>
            <person name="Frangeul L."/>
            <person name="Msadek T."/>
            <person name="Zouine M."/>
            <person name="Couve E."/>
            <person name="Lalioui L."/>
            <person name="Poyart C."/>
            <person name="Trieu-Cuot P."/>
            <person name="Kunst F."/>
        </authorList>
    </citation>
    <scope>NUCLEOTIDE SEQUENCE [LARGE SCALE GENOMIC DNA]</scope>
    <source>
        <strain>NEM316</strain>
    </source>
</reference>
<sequence length="496" mass="56486">MSNQHIEELNDQQIVRREKMAALTEQGIDPFGKRFERTATSGQLNEKYADKSKEDLHDIEETATIAGRLMTKRGKGKVGFAHIQDREGQIQIYVRKDSVGEENYEIFKKADLGDFLGVEGQVMRTDMGELSIKATHITHLSKALRPLPEKFHGLTDIETIYRKRHLDLISNRDSFDRFVTRSKIISEIRRFMDSNGFLEVETPVLHNEAGGASARPFITHHNAQDIDMVLRIATELHLKRLIVGGMERVYEIGRIFRNEGMDATHNPEFTSIEAYQAYADYQDIMDLTEGIIQHVTKTVKGDGPINYQGTEIKINEPFKRVHMVDAVKEITGIDFWKEMTLEEAQALAQEKNVPLEKHFTTVGHIINAFFEEFVEDTLIQPTFVFGHPVEVSPLAKKNDTDPRFTDRFELFIMTKEYANAFTELNDPIDQLSRFEAQASAKELGDDEATGVDYDYVEALEYGMPPTGGLGIGIDRLCMLLTDTTTIRDVLLFPTMK</sequence>
<comment type="catalytic activity">
    <reaction evidence="1">
        <text>tRNA(Lys) + L-lysine + ATP = L-lysyl-tRNA(Lys) + AMP + diphosphate</text>
        <dbReference type="Rhea" id="RHEA:20792"/>
        <dbReference type="Rhea" id="RHEA-COMP:9696"/>
        <dbReference type="Rhea" id="RHEA-COMP:9697"/>
        <dbReference type="ChEBI" id="CHEBI:30616"/>
        <dbReference type="ChEBI" id="CHEBI:32551"/>
        <dbReference type="ChEBI" id="CHEBI:33019"/>
        <dbReference type="ChEBI" id="CHEBI:78442"/>
        <dbReference type="ChEBI" id="CHEBI:78529"/>
        <dbReference type="ChEBI" id="CHEBI:456215"/>
        <dbReference type="EC" id="6.1.1.6"/>
    </reaction>
</comment>
<comment type="cofactor">
    <cofactor evidence="1">
        <name>Mg(2+)</name>
        <dbReference type="ChEBI" id="CHEBI:18420"/>
    </cofactor>
    <text evidence="1">Binds 3 Mg(2+) ions per subunit.</text>
</comment>
<comment type="subunit">
    <text evidence="1">Homodimer.</text>
</comment>
<comment type="subcellular location">
    <subcellularLocation>
        <location evidence="1">Cytoplasm</location>
    </subcellularLocation>
</comment>
<comment type="similarity">
    <text evidence="1">Belongs to the class-II aminoacyl-tRNA synthetase family.</text>
</comment>
<proteinExistence type="inferred from homology"/>
<gene>
    <name evidence="1" type="primary">lysS</name>
    <name type="ordered locus">gbs0771</name>
</gene>
<protein>
    <recommendedName>
        <fullName evidence="1">Lysine--tRNA ligase</fullName>
        <ecNumber evidence="1">6.1.1.6</ecNumber>
    </recommendedName>
    <alternativeName>
        <fullName evidence="1">Lysyl-tRNA synthetase</fullName>
        <shortName evidence="1">LysRS</shortName>
    </alternativeName>
</protein>
<keyword id="KW-0030">Aminoacyl-tRNA synthetase</keyword>
<keyword id="KW-0067">ATP-binding</keyword>
<keyword id="KW-0963">Cytoplasm</keyword>
<keyword id="KW-0436">Ligase</keyword>
<keyword id="KW-0460">Magnesium</keyword>
<keyword id="KW-0479">Metal-binding</keyword>
<keyword id="KW-0547">Nucleotide-binding</keyword>
<keyword id="KW-0648">Protein biosynthesis</keyword>
<feature type="chain" id="PRO_0000152684" description="Lysine--tRNA ligase">
    <location>
        <begin position="1"/>
        <end position="496"/>
    </location>
</feature>
<feature type="binding site" evidence="1">
    <location>
        <position position="409"/>
    </location>
    <ligand>
        <name>Mg(2+)</name>
        <dbReference type="ChEBI" id="CHEBI:18420"/>
        <label>1</label>
    </ligand>
</feature>
<feature type="binding site" evidence="1">
    <location>
        <position position="416"/>
    </location>
    <ligand>
        <name>Mg(2+)</name>
        <dbReference type="ChEBI" id="CHEBI:18420"/>
        <label>1</label>
    </ligand>
</feature>
<feature type="binding site" evidence="1">
    <location>
        <position position="416"/>
    </location>
    <ligand>
        <name>Mg(2+)</name>
        <dbReference type="ChEBI" id="CHEBI:18420"/>
        <label>2</label>
    </ligand>
</feature>
<evidence type="ECO:0000255" key="1">
    <source>
        <dbReference type="HAMAP-Rule" id="MF_00252"/>
    </source>
</evidence>
<name>SYK_STRA3</name>